<reference key="1">
    <citation type="journal article" date="2006" name="J. Bacteriol.">
        <title>Living with genome instability: the adaptation of phytoplasmas to diverse environments of their insect and plant hosts.</title>
        <authorList>
            <person name="Bai X."/>
            <person name="Zhang J."/>
            <person name="Ewing A."/>
            <person name="Miller S.A."/>
            <person name="Jancso Radek A."/>
            <person name="Shevchenko D.V."/>
            <person name="Tsukerman K."/>
            <person name="Walunas T."/>
            <person name="Lapidus A."/>
            <person name="Campbell J.W."/>
            <person name="Hogenhout S.A."/>
        </authorList>
    </citation>
    <scope>NUCLEOTIDE SEQUENCE [LARGE SCALE GENOMIC DNA]</scope>
    <source>
        <strain>AYWB</strain>
    </source>
</reference>
<comment type="function">
    <text evidence="1">Catalyzes the attachment of proline to tRNA(Pro) in a two-step reaction: proline is first activated by ATP to form Pro-AMP and then transferred to the acceptor end of tRNA(Pro).</text>
</comment>
<comment type="catalytic activity">
    <reaction evidence="1">
        <text>tRNA(Pro) + L-proline + ATP = L-prolyl-tRNA(Pro) + AMP + diphosphate</text>
        <dbReference type="Rhea" id="RHEA:14305"/>
        <dbReference type="Rhea" id="RHEA-COMP:9700"/>
        <dbReference type="Rhea" id="RHEA-COMP:9702"/>
        <dbReference type="ChEBI" id="CHEBI:30616"/>
        <dbReference type="ChEBI" id="CHEBI:33019"/>
        <dbReference type="ChEBI" id="CHEBI:60039"/>
        <dbReference type="ChEBI" id="CHEBI:78442"/>
        <dbReference type="ChEBI" id="CHEBI:78532"/>
        <dbReference type="ChEBI" id="CHEBI:456215"/>
        <dbReference type="EC" id="6.1.1.15"/>
    </reaction>
</comment>
<comment type="subunit">
    <text evidence="1">Homodimer.</text>
</comment>
<comment type="subcellular location">
    <subcellularLocation>
        <location evidence="1">Cytoplasm</location>
    </subcellularLocation>
</comment>
<comment type="domain">
    <text evidence="1">Consists of three domains: the N-terminal catalytic domain, the anticodon-binding domain and the C-terminal extension.</text>
</comment>
<comment type="similarity">
    <text evidence="1">Belongs to the class-II aminoacyl-tRNA synthetase family. ProS type 3 subfamily.</text>
</comment>
<sequence length="474" mass="54536">MKTMKRVKTVATRLSDFGKWYTDICLKAELIAYSEAKGFIIYLPYGYALWENIQKHLNCTLQKTGHQNVYFPLVFPEKLFHKEKEHIQGFSPEAAMITTTGKKNLSEKLVIRPTSEILFSQYYSKTITSYRDLPKLYNQWCNVVRWEKTTKPFLRGKEFLWQEGHTVHATEQEAMQQTLSILDIYQKLGKDLLALPFVCGKKTETEKFAGALITYSIEALMHDGQALQAGTSHYLGIIFAKSFQIQFQDCDNQKKYAHQTSWGVSTRLIGALIMVHSDDEGLVLPPYVAPMQIVIIPLQTQDESVKQVSENLFSILQKNYRVHLDLQDKTAGWKFSQYELKGVPLRIEIGKRGLENDEVTIFQRYNFAKQNIKIKDFPSQIPQLFETMHNNMYQKALQHLEQNRKQATTYEEFKTYLKQGGYVAMSISGTDAELQIKQETGATARVILETNLITANCPVTNKKALQTVLFARAY</sequence>
<feature type="chain" id="PRO_0000249115" description="Proline--tRNA ligase">
    <location>
        <begin position="1"/>
        <end position="474"/>
    </location>
</feature>
<protein>
    <recommendedName>
        <fullName evidence="1">Proline--tRNA ligase</fullName>
        <ecNumber evidence="1">6.1.1.15</ecNumber>
    </recommendedName>
    <alternativeName>
        <fullName evidence="1">Prolyl-tRNA synthetase</fullName>
        <shortName evidence="1">ProRS</shortName>
    </alternativeName>
</protein>
<accession>Q2NJ01</accession>
<proteinExistence type="inferred from homology"/>
<dbReference type="EC" id="6.1.1.15" evidence="1"/>
<dbReference type="EMBL" id="CP000061">
    <property type="protein sequence ID" value="ABC65592.1"/>
    <property type="molecule type" value="Genomic_DNA"/>
</dbReference>
<dbReference type="RefSeq" id="WP_011412755.1">
    <property type="nucleotide sequence ID" value="NC_007716.1"/>
</dbReference>
<dbReference type="SMR" id="Q2NJ01"/>
<dbReference type="STRING" id="322098.AYWB_475"/>
<dbReference type="KEGG" id="ayw:AYWB_475"/>
<dbReference type="eggNOG" id="COG0441">
    <property type="taxonomic scope" value="Bacteria"/>
</dbReference>
<dbReference type="HOGENOM" id="CLU_001882_4_2_14"/>
<dbReference type="OrthoDB" id="9809052at2"/>
<dbReference type="PhylomeDB" id="Q2NJ01"/>
<dbReference type="Proteomes" id="UP000001934">
    <property type="component" value="Chromosome"/>
</dbReference>
<dbReference type="GO" id="GO:0017101">
    <property type="term" value="C:aminoacyl-tRNA synthetase multienzyme complex"/>
    <property type="evidence" value="ECO:0007669"/>
    <property type="project" value="TreeGrafter"/>
</dbReference>
<dbReference type="GO" id="GO:0005737">
    <property type="term" value="C:cytoplasm"/>
    <property type="evidence" value="ECO:0007669"/>
    <property type="project" value="UniProtKB-SubCell"/>
</dbReference>
<dbReference type="GO" id="GO:0005524">
    <property type="term" value="F:ATP binding"/>
    <property type="evidence" value="ECO:0007669"/>
    <property type="project" value="UniProtKB-UniRule"/>
</dbReference>
<dbReference type="GO" id="GO:0004827">
    <property type="term" value="F:proline-tRNA ligase activity"/>
    <property type="evidence" value="ECO:0007669"/>
    <property type="project" value="UniProtKB-UniRule"/>
</dbReference>
<dbReference type="GO" id="GO:0006433">
    <property type="term" value="P:prolyl-tRNA aminoacylation"/>
    <property type="evidence" value="ECO:0007669"/>
    <property type="project" value="UniProtKB-UniRule"/>
</dbReference>
<dbReference type="CDD" id="cd00778">
    <property type="entry name" value="ProRS_core_arch_euk"/>
    <property type="match status" value="1"/>
</dbReference>
<dbReference type="FunFam" id="3.30.930.10:FF:000037">
    <property type="entry name" value="Proline--tRNA ligase"/>
    <property type="match status" value="1"/>
</dbReference>
<dbReference type="Gene3D" id="3.40.50.800">
    <property type="entry name" value="Anticodon-binding domain"/>
    <property type="match status" value="1"/>
</dbReference>
<dbReference type="Gene3D" id="3.30.930.10">
    <property type="entry name" value="Bira Bifunctional Protein, Domain 2"/>
    <property type="match status" value="1"/>
</dbReference>
<dbReference type="Gene3D" id="3.30.110.30">
    <property type="entry name" value="C-terminal domain of ProRS"/>
    <property type="match status" value="1"/>
</dbReference>
<dbReference type="HAMAP" id="MF_01571">
    <property type="entry name" value="Pro_tRNA_synth_type3"/>
    <property type="match status" value="1"/>
</dbReference>
<dbReference type="InterPro" id="IPR002314">
    <property type="entry name" value="aa-tRNA-synt_IIb"/>
</dbReference>
<dbReference type="InterPro" id="IPR006195">
    <property type="entry name" value="aa-tRNA-synth_II"/>
</dbReference>
<dbReference type="InterPro" id="IPR045864">
    <property type="entry name" value="aa-tRNA-synth_II/BPL/LPL"/>
</dbReference>
<dbReference type="InterPro" id="IPR004154">
    <property type="entry name" value="Anticodon-bd"/>
</dbReference>
<dbReference type="InterPro" id="IPR036621">
    <property type="entry name" value="Anticodon-bd_dom_sf"/>
</dbReference>
<dbReference type="InterPro" id="IPR002316">
    <property type="entry name" value="Pro-tRNA-ligase_IIa"/>
</dbReference>
<dbReference type="InterPro" id="IPR004499">
    <property type="entry name" value="Pro-tRNA-ligase_IIa_arc-type"/>
</dbReference>
<dbReference type="InterPro" id="IPR016061">
    <property type="entry name" value="Pro-tRNA_ligase_II_C"/>
</dbReference>
<dbReference type="InterPro" id="IPR017449">
    <property type="entry name" value="Pro-tRNA_synth_II"/>
</dbReference>
<dbReference type="InterPro" id="IPR033721">
    <property type="entry name" value="ProRS_core_arch_euk"/>
</dbReference>
<dbReference type="NCBIfam" id="TIGR00408">
    <property type="entry name" value="proS_fam_I"/>
    <property type="match status" value="1"/>
</dbReference>
<dbReference type="PANTHER" id="PTHR43382:SF2">
    <property type="entry name" value="BIFUNCTIONAL GLUTAMATE_PROLINE--TRNA LIGASE"/>
    <property type="match status" value="1"/>
</dbReference>
<dbReference type="PANTHER" id="PTHR43382">
    <property type="entry name" value="PROLYL-TRNA SYNTHETASE"/>
    <property type="match status" value="1"/>
</dbReference>
<dbReference type="Pfam" id="PF03129">
    <property type="entry name" value="HGTP_anticodon"/>
    <property type="match status" value="1"/>
</dbReference>
<dbReference type="Pfam" id="PF09180">
    <property type="entry name" value="ProRS-C_1"/>
    <property type="match status" value="1"/>
</dbReference>
<dbReference type="Pfam" id="PF00587">
    <property type="entry name" value="tRNA-synt_2b"/>
    <property type="match status" value="1"/>
</dbReference>
<dbReference type="PRINTS" id="PR01046">
    <property type="entry name" value="TRNASYNTHPRO"/>
</dbReference>
<dbReference type="SMART" id="SM00946">
    <property type="entry name" value="ProRS-C_1"/>
    <property type="match status" value="1"/>
</dbReference>
<dbReference type="SUPFAM" id="SSF64586">
    <property type="entry name" value="C-terminal domain of ProRS"/>
    <property type="match status" value="1"/>
</dbReference>
<dbReference type="SUPFAM" id="SSF52954">
    <property type="entry name" value="Class II aaRS ABD-related"/>
    <property type="match status" value="1"/>
</dbReference>
<dbReference type="SUPFAM" id="SSF55681">
    <property type="entry name" value="Class II aaRS and biotin synthetases"/>
    <property type="match status" value="1"/>
</dbReference>
<dbReference type="PROSITE" id="PS50862">
    <property type="entry name" value="AA_TRNA_LIGASE_II"/>
    <property type="match status" value="1"/>
</dbReference>
<keyword id="KW-0030">Aminoacyl-tRNA synthetase</keyword>
<keyword id="KW-0067">ATP-binding</keyword>
<keyword id="KW-0963">Cytoplasm</keyword>
<keyword id="KW-0436">Ligase</keyword>
<keyword id="KW-0547">Nucleotide-binding</keyword>
<keyword id="KW-0648">Protein biosynthesis</keyword>
<name>SYP_AYWBP</name>
<organism>
    <name type="scientific">Aster yellows witches'-broom phytoplasma (strain AYWB)</name>
    <dbReference type="NCBI Taxonomy" id="322098"/>
    <lineage>
        <taxon>Bacteria</taxon>
        <taxon>Bacillati</taxon>
        <taxon>Mycoplasmatota</taxon>
        <taxon>Mollicutes</taxon>
        <taxon>Acholeplasmatales</taxon>
        <taxon>Acholeplasmataceae</taxon>
        <taxon>Candidatus Phytoplasma</taxon>
        <taxon>16SrI (Aster yellows group)</taxon>
    </lineage>
</organism>
<evidence type="ECO:0000255" key="1">
    <source>
        <dbReference type="HAMAP-Rule" id="MF_01571"/>
    </source>
</evidence>
<gene>
    <name evidence="1" type="primary">proS</name>
    <name type="ordered locus">AYWB_475</name>
</gene>